<protein>
    <recommendedName>
        <fullName>Serine/arginine-rich splicing factor 2</fullName>
    </recommendedName>
    <alternativeName>
        <fullName>Splicing component, 35 kDa</fullName>
    </alternativeName>
    <alternativeName>
        <fullName>Splicing factor SC35</fullName>
        <shortName>SC-35</shortName>
    </alternativeName>
    <alternativeName>
        <fullName>Splicing factor, arginine/serine-rich 2</fullName>
    </alternativeName>
</protein>
<reference key="1">
    <citation type="submission" date="2006-08" db="EMBL/GenBank/DDBJ databases">
        <authorList>
            <person name="Liu G.Y."/>
        </authorList>
    </citation>
    <scope>NUCLEOTIDE SEQUENCE [LARGE SCALE MRNA]</scope>
</reference>
<comment type="function">
    <text evidence="1">Necessary for the splicing of pre-mRNA. It is required for formation of the earliest ATP-dependent splicing complex and interacts with spliceosomal components bound to both the 5'- and 3'-splice sites during spliceosome assembly. It also is required for ATP-dependent interactions of both U1 and U2 snRNPs with pre-mRNA. Interacts with other spliceosomal components, via the RS domains, to form a bridge between the 5'- and 3'-splice site binding components, U1 snRNP and U2AF. Binds to purine-rich RNA sequences, either 5'-AGSAGAGTA-3' (S=C or G) or 5'-GTTCGAGTA-3'. Can bind to beta-globin mRNA and commit it to the splicing pathway. The phosphorylated form (by SRPK2) is required for cellular apoptosis in response to cisplatin treatment (By similarity).</text>
</comment>
<comment type="subunit">
    <text evidence="1">In vitro, self-associates and binds SRSF1/SFRS1 (ASF/SF2), SNRNP70 and U2AF1 but not U2AF2. Binds SREK1/SFRS12. Interacts with CCNL1 and CCNL2. Interacts with SCAF11. Interacts with ZRSR2/U2AF1-RS2. Interacts with CCDC55 (via C-terminus). Interacts with BRDT (By similarity).</text>
</comment>
<comment type="subcellular location">
    <subcellularLocation>
        <location evidence="1">Nucleus</location>
    </subcellularLocation>
    <subcellularLocation>
        <location evidence="1">Nucleus</location>
        <location evidence="1">Nucleoplasm</location>
    </subcellularLocation>
    <subcellularLocation>
        <location evidence="1">Nucleus speckle</location>
    </subcellularLocation>
    <text evidence="1">Phosphorylation by SRPK2 provokes its redistribution from the nuclear speckle to nucleoplasm.</text>
</comment>
<comment type="PTM">
    <text evidence="1">Extensively phosphorylated on serine residues in the RS domain. Phosphorylated by SRPK2 and this causes its redistribution from the nuclear speckle to nucleoplasm and controls cell fate decision in response to cisplatin treatment. KAT5/TIP60 inhibits its phosphorylation by preventing SRPK2 nuclear translocation (By similarity).</text>
</comment>
<comment type="PTM">
    <text evidence="1">Acetylation on Lys-52 by KAT5/TIP60 promotes its proteasomal degradation. This effect is counterbalanced by HDAC6, which positively controls SRSF2 protein level by deacetylating it and preventing its proteasomal degradation (By similarity).</text>
</comment>
<comment type="similarity">
    <text evidence="5">Belongs to the splicing factor SR family.</text>
</comment>
<sequence>MSYGRPPPDVEGMTSLKVDNLTYRTSPDTLRRVFEKYGRVGDVYIPRDRYTKESRGFAFVRFHDKRDAEDAMDAMDGAVLDGRELRVQMARYGRPPDSHHSRRGPPPRRYGGGGYGRRSRSPRRRRRSRSRSRSRSRSRSRSRYSRSKSRSRTRSRSRSTSKSRSARRSKSKSSSVSRSRSRSRSRSRSRSPPPASKRESKSRSRSKSPPKSPEEEGAVSS</sequence>
<keyword id="KW-0007">Acetylation</keyword>
<keyword id="KW-0507">mRNA processing</keyword>
<keyword id="KW-0508">mRNA splicing</keyword>
<keyword id="KW-0539">Nucleus</keyword>
<keyword id="KW-0597">Phosphoprotein</keyword>
<keyword id="KW-1185">Reference proteome</keyword>
<keyword id="KW-0694">RNA-binding</keyword>
<feature type="initiator methionine" description="Removed" evidence="2">
    <location>
        <position position="1"/>
    </location>
</feature>
<feature type="chain" id="PRO_0000289802" description="Serine/arginine-rich splicing factor 2">
    <location>
        <begin position="2"/>
        <end position="221"/>
    </location>
</feature>
<feature type="domain" description="RRM" evidence="3">
    <location>
        <begin position="14"/>
        <end position="92"/>
    </location>
</feature>
<feature type="region of interest" description="Disordered" evidence="4">
    <location>
        <begin position="92"/>
        <end position="221"/>
    </location>
</feature>
<feature type="compositionally biased region" description="Basic residues" evidence="4">
    <location>
        <begin position="117"/>
        <end position="171"/>
    </location>
</feature>
<feature type="compositionally biased region" description="Basic residues" evidence="4">
    <location>
        <begin position="179"/>
        <end position="189"/>
    </location>
</feature>
<feature type="modified residue" description="N-acetylserine" evidence="2">
    <location>
        <position position="2"/>
    </location>
</feature>
<feature type="modified residue" description="Phosphoserine" evidence="2">
    <location>
        <position position="2"/>
    </location>
</feature>
<feature type="modified residue" description="Phosphothreonine" evidence="2">
    <location>
        <position position="22"/>
    </location>
</feature>
<feature type="modified residue" description="Phosphothreonine" evidence="2">
    <location>
        <position position="25"/>
    </location>
</feature>
<feature type="modified residue" description="Phosphoserine" evidence="2">
    <location>
        <position position="26"/>
    </location>
</feature>
<feature type="modified residue" description="N6-acetyllysine" evidence="2">
    <location>
        <position position="52"/>
    </location>
</feature>
<feature type="modified residue" description="Phosphoserine" evidence="2">
    <location>
        <position position="189"/>
    </location>
</feature>
<feature type="modified residue" description="Phosphoserine" evidence="2">
    <location>
        <position position="191"/>
    </location>
</feature>
<feature type="modified residue" description="Phosphoserine" evidence="2">
    <location>
        <position position="204"/>
    </location>
</feature>
<feature type="modified residue" description="Phosphoserine" evidence="2">
    <location>
        <position position="206"/>
    </location>
</feature>
<feature type="modified residue" description="Phosphoserine" evidence="2">
    <location>
        <position position="208"/>
    </location>
</feature>
<feature type="modified residue" description="Phosphoserine" evidence="2">
    <location>
        <position position="212"/>
    </location>
</feature>
<feature type="modified residue" description="Phosphoserine" evidence="2">
    <location>
        <position position="220"/>
    </location>
</feature>
<dbReference type="EMBL" id="DQ972966">
    <property type="protein sequence ID" value="ABI96202.1"/>
    <property type="molecule type" value="mRNA"/>
</dbReference>
<dbReference type="RefSeq" id="NP_001070697.1">
    <property type="nucleotide sequence ID" value="NM_001077229.1"/>
</dbReference>
<dbReference type="RefSeq" id="XP_020921921.1">
    <property type="nucleotide sequence ID" value="XM_021066262.1"/>
</dbReference>
<dbReference type="RefSeq" id="XP_020921922.1">
    <property type="nucleotide sequence ID" value="XM_021066263.1"/>
</dbReference>
<dbReference type="BMRB" id="Q06A98"/>
<dbReference type="SMR" id="Q06A98"/>
<dbReference type="FunCoup" id="Q06A98">
    <property type="interactions" value="3080"/>
</dbReference>
<dbReference type="STRING" id="9823.ENSSSCP00000040547"/>
<dbReference type="PaxDb" id="9823-ENSSSCP00000026859"/>
<dbReference type="PeptideAtlas" id="Q06A98"/>
<dbReference type="Ensembl" id="ENSSSCT00000065251.3">
    <property type="protein sequence ID" value="ENSSSCP00000040547.1"/>
    <property type="gene ID" value="ENSSSCG00000036592.3"/>
</dbReference>
<dbReference type="Ensembl" id="ENSSSCT00025066682.1">
    <property type="protein sequence ID" value="ENSSSCP00025028517.1"/>
    <property type="gene ID" value="ENSSSCG00025048966.1"/>
</dbReference>
<dbReference type="Ensembl" id="ENSSSCT00030013755.1">
    <property type="protein sequence ID" value="ENSSSCP00030006155.1"/>
    <property type="gene ID" value="ENSSSCG00030010045.1"/>
</dbReference>
<dbReference type="Ensembl" id="ENSSSCT00035078579.1">
    <property type="protein sequence ID" value="ENSSSCP00035032205.1"/>
    <property type="gene ID" value="ENSSSCG00035058701.1"/>
</dbReference>
<dbReference type="Ensembl" id="ENSSSCT00040002339.1">
    <property type="protein sequence ID" value="ENSSSCP00040000651.1"/>
    <property type="gene ID" value="ENSSSCG00040001918.1"/>
</dbReference>
<dbReference type="Ensembl" id="ENSSSCT00045060028.1">
    <property type="protein sequence ID" value="ENSSSCP00045042147.1"/>
    <property type="gene ID" value="ENSSSCG00045034960.1"/>
</dbReference>
<dbReference type="Ensembl" id="ENSSSCT00050015913.1">
    <property type="protein sequence ID" value="ENSSSCP00050006514.1"/>
    <property type="gene ID" value="ENSSSCG00050011823.1"/>
</dbReference>
<dbReference type="Ensembl" id="ENSSSCT00055015874.1">
    <property type="protein sequence ID" value="ENSSSCP00055012483.1"/>
    <property type="gene ID" value="ENSSSCG00055008115.1"/>
</dbReference>
<dbReference type="Ensembl" id="ENSSSCT00060094225.1">
    <property type="protein sequence ID" value="ENSSSCP00060040765.1"/>
    <property type="gene ID" value="ENSSSCG00060069000.1"/>
</dbReference>
<dbReference type="Ensembl" id="ENSSSCT00065010588.1">
    <property type="protein sequence ID" value="ENSSSCP00065004400.1"/>
    <property type="gene ID" value="ENSSSCG00065007883.1"/>
</dbReference>
<dbReference type="Ensembl" id="ENSSSCT00070039314.1">
    <property type="protein sequence ID" value="ENSSSCP00070032927.1"/>
    <property type="gene ID" value="ENSSSCG00070019839.1"/>
</dbReference>
<dbReference type="Ensembl" id="ENSSSCT00070039315.1">
    <property type="protein sequence ID" value="ENSSSCP00070032929.1"/>
    <property type="gene ID" value="ENSSSCG00070019839.1"/>
</dbReference>
<dbReference type="Ensembl" id="ENSSSCT00115036741">
    <property type="protein sequence ID" value="ENSSSCP00115034771"/>
    <property type="gene ID" value="ENSSSCG00115020733"/>
</dbReference>
<dbReference type="GeneID" id="768117"/>
<dbReference type="KEGG" id="ssc:768117"/>
<dbReference type="CTD" id="6427"/>
<dbReference type="VGNC" id="VGNC:99085">
    <property type="gene designation" value="SRSF2"/>
</dbReference>
<dbReference type="eggNOG" id="KOG4207">
    <property type="taxonomic scope" value="Eukaryota"/>
</dbReference>
<dbReference type="GeneTree" id="ENSGT00940000154883"/>
<dbReference type="InParanoid" id="Q06A98"/>
<dbReference type="OMA" id="PLIRCDV"/>
<dbReference type="OrthoDB" id="8093034at2759"/>
<dbReference type="Reactome" id="R-SSC-159236">
    <property type="pathway name" value="Transport of Mature mRNA derived from an Intron-Containing Transcript"/>
</dbReference>
<dbReference type="Reactome" id="R-SSC-72163">
    <property type="pathway name" value="mRNA Splicing - Major Pathway"/>
</dbReference>
<dbReference type="Reactome" id="R-SSC-72165">
    <property type="pathway name" value="mRNA Splicing - Minor Pathway"/>
</dbReference>
<dbReference type="Reactome" id="R-SSC-72187">
    <property type="pathway name" value="mRNA 3'-end processing"/>
</dbReference>
<dbReference type="Reactome" id="R-SSC-72203">
    <property type="pathway name" value="Processing of Capped Intron-Containing Pre-mRNA"/>
</dbReference>
<dbReference type="Reactome" id="R-SSC-73856">
    <property type="pathway name" value="RNA Polymerase II Transcription Termination"/>
</dbReference>
<dbReference type="Proteomes" id="UP000008227">
    <property type="component" value="Chromosome 12"/>
</dbReference>
<dbReference type="Proteomes" id="UP000314985">
    <property type="component" value="Chromosome 12"/>
</dbReference>
<dbReference type="Proteomes" id="UP000694570">
    <property type="component" value="Unplaced"/>
</dbReference>
<dbReference type="Proteomes" id="UP000694571">
    <property type="component" value="Unplaced"/>
</dbReference>
<dbReference type="Proteomes" id="UP000694720">
    <property type="component" value="Unplaced"/>
</dbReference>
<dbReference type="Proteomes" id="UP000694722">
    <property type="component" value="Unplaced"/>
</dbReference>
<dbReference type="Proteomes" id="UP000694723">
    <property type="component" value="Unplaced"/>
</dbReference>
<dbReference type="Proteomes" id="UP000694724">
    <property type="component" value="Unplaced"/>
</dbReference>
<dbReference type="Proteomes" id="UP000694725">
    <property type="component" value="Unplaced"/>
</dbReference>
<dbReference type="Proteomes" id="UP000694726">
    <property type="component" value="Unplaced"/>
</dbReference>
<dbReference type="Proteomes" id="UP000694727">
    <property type="component" value="Unplaced"/>
</dbReference>
<dbReference type="Proteomes" id="UP000694728">
    <property type="component" value="Unplaced"/>
</dbReference>
<dbReference type="Bgee" id="ENSSSCG00000036592">
    <property type="expression patterns" value="Expressed in hindlimb bud and 40 other cell types or tissues"/>
</dbReference>
<dbReference type="GO" id="GO:0005829">
    <property type="term" value="C:cytosol"/>
    <property type="evidence" value="ECO:0007669"/>
    <property type="project" value="Ensembl"/>
</dbReference>
<dbReference type="GO" id="GO:0016607">
    <property type="term" value="C:nuclear speck"/>
    <property type="evidence" value="ECO:0000318"/>
    <property type="project" value="GO_Central"/>
</dbReference>
<dbReference type="GO" id="GO:0003723">
    <property type="term" value="F:RNA binding"/>
    <property type="evidence" value="ECO:0000318"/>
    <property type="project" value="GO_Central"/>
</dbReference>
<dbReference type="GO" id="GO:0006397">
    <property type="term" value="P:mRNA processing"/>
    <property type="evidence" value="ECO:0007669"/>
    <property type="project" value="UniProtKB-KW"/>
</dbReference>
<dbReference type="GO" id="GO:0000381">
    <property type="term" value="P:regulation of alternative mRNA splicing, via spliceosome"/>
    <property type="evidence" value="ECO:0000318"/>
    <property type="project" value="GO_Central"/>
</dbReference>
<dbReference type="GO" id="GO:0008380">
    <property type="term" value="P:RNA splicing"/>
    <property type="evidence" value="ECO:0007669"/>
    <property type="project" value="UniProtKB-KW"/>
</dbReference>
<dbReference type="CDD" id="cd12311">
    <property type="entry name" value="RRM_SRSF2_SRSF8"/>
    <property type="match status" value="1"/>
</dbReference>
<dbReference type="FunFam" id="3.30.70.330:FF:000504">
    <property type="entry name" value="Serine/arginine-rich splicing factor 2"/>
    <property type="match status" value="1"/>
</dbReference>
<dbReference type="Gene3D" id="3.30.70.330">
    <property type="match status" value="1"/>
</dbReference>
<dbReference type="InterPro" id="IPR012677">
    <property type="entry name" value="Nucleotide-bd_a/b_plait_sf"/>
</dbReference>
<dbReference type="InterPro" id="IPR035979">
    <property type="entry name" value="RBD_domain_sf"/>
</dbReference>
<dbReference type="InterPro" id="IPR051106">
    <property type="entry name" value="RNA-bind/splicing_reg"/>
</dbReference>
<dbReference type="InterPro" id="IPR000504">
    <property type="entry name" value="RRM_dom"/>
</dbReference>
<dbReference type="InterPro" id="IPR003954">
    <property type="entry name" value="RRM_dom_euk"/>
</dbReference>
<dbReference type="PANTHER" id="PTHR48028">
    <property type="entry name" value="GLYCINE-RICH RNA-BINDING PROTEIN RZ1A"/>
    <property type="match status" value="1"/>
</dbReference>
<dbReference type="PANTHER" id="PTHR48028:SF4">
    <property type="entry name" value="SC35-LIKE SPLICING FACTOR"/>
    <property type="match status" value="1"/>
</dbReference>
<dbReference type="Pfam" id="PF00076">
    <property type="entry name" value="RRM_1"/>
    <property type="match status" value="1"/>
</dbReference>
<dbReference type="SMART" id="SM00360">
    <property type="entry name" value="RRM"/>
    <property type="match status" value="1"/>
</dbReference>
<dbReference type="SMART" id="SM00361">
    <property type="entry name" value="RRM_1"/>
    <property type="match status" value="1"/>
</dbReference>
<dbReference type="SUPFAM" id="SSF54928">
    <property type="entry name" value="RNA-binding domain, RBD"/>
    <property type="match status" value="1"/>
</dbReference>
<dbReference type="PROSITE" id="PS50102">
    <property type="entry name" value="RRM"/>
    <property type="match status" value="1"/>
</dbReference>
<accession>Q06A98</accession>
<name>SRSF2_PIG</name>
<evidence type="ECO:0000250" key="1"/>
<evidence type="ECO:0000250" key="2">
    <source>
        <dbReference type="UniProtKB" id="Q01130"/>
    </source>
</evidence>
<evidence type="ECO:0000255" key="3">
    <source>
        <dbReference type="PROSITE-ProRule" id="PRU00176"/>
    </source>
</evidence>
<evidence type="ECO:0000256" key="4">
    <source>
        <dbReference type="SAM" id="MobiDB-lite"/>
    </source>
</evidence>
<evidence type="ECO:0000305" key="5"/>
<organism>
    <name type="scientific">Sus scrofa</name>
    <name type="common">Pig</name>
    <dbReference type="NCBI Taxonomy" id="9823"/>
    <lineage>
        <taxon>Eukaryota</taxon>
        <taxon>Metazoa</taxon>
        <taxon>Chordata</taxon>
        <taxon>Craniata</taxon>
        <taxon>Vertebrata</taxon>
        <taxon>Euteleostomi</taxon>
        <taxon>Mammalia</taxon>
        <taxon>Eutheria</taxon>
        <taxon>Laurasiatheria</taxon>
        <taxon>Artiodactyla</taxon>
        <taxon>Suina</taxon>
        <taxon>Suidae</taxon>
        <taxon>Sus</taxon>
    </lineage>
</organism>
<gene>
    <name type="primary">SRSF2</name>
    <name type="synonym">SFRS2</name>
</gene>
<proteinExistence type="evidence at transcript level"/>